<dbReference type="EMBL" id="BK010672">
    <property type="protein sequence ID" value="DAC76717.1"/>
    <property type="molecule type" value="Genomic_DNA"/>
</dbReference>
<dbReference type="GO" id="GO:0016020">
    <property type="term" value="C:membrane"/>
    <property type="evidence" value="ECO:0007669"/>
    <property type="project" value="UniProtKB-SubCell"/>
</dbReference>
<dbReference type="GO" id="GO:0022857">
    <property type="term" value="F:transmembrane transporter activity"/>
    <property type="evidence" value="ECO:0007669"/>
    <property type="project" value="InterPro"/>
</dbReference>
<dbReference type="CDD" id="cd17325">
    <property type="entry name" value="MFS_MdtG_SLC18_like"/>
    <property type="match status" value="1"/>
</dbReference>
<dbReference type="Gene3D" id="1.20.1250.20">
    <property type="entry name" value="MFS general substrate transporter like domains"/>
    <property type="match status" value="2"/>
</dbReference>
<dbReference type="InterPro" id="IPR011701">
    <property type="entry name" value="MFS"/>
</dbReference>
<dbReference type="InterPro" id="IPR020846">
    <property type="entry name" value="MFS_dom"/>
</dbReference>
<dbReference type="InterPro" id="IPR036259">
    <property type="entry name" value="MFS_trans_sf"/>
</dbReference>
<dbReference type="InterPro" id="IPR050930">
    <property type="entry name" value="MFS_Vesicular_Transporter"/>
</dbReference>
<dbReference type="PANTHER" id="PTHR23506">
    <property type="entry name" value="GH10249P"/>
    <property type="match status" value="1"/>
</dbReference>
<dbReference type="PANTHER" id="PTHR23506:SF37">
    <property type="entry name" value="MAJOR FACILITATOR SUPERFAMILY (MFS) PROFILE DOMAIN-CONTAINING PROTEIN"/>
    <property type="match status" value="1"/>
</dbReference>
<dbReference type="Pfam" id="PF07690">
    <property type="entry name" value="MFS_1"/>
    <property type="match status" value="2"/>
</dbReference>
<dbReference type="SUPFAM" id="SSF103473">
    <property type="entry name" value="MFS general substrate transporter"/>
    <property type="match status" value="1"/>
</dbReference>
<dbReference type="PROSITE" id="PS50850">
    <property type="entry name" value="MFS"/>
    <property type="match status" value="1"/>
</dbReference>
<gene>
    <name type="primary">ppzB</name>
</gene>
<feature type="chain" id="PRO_0000461610" description="MFS-type transporter ppzB">
    <location>
        <begin position="1"/>
        <end position="456"/>
    </location>
</feature>
<feature type="transmembrane region" description="Helical" evidence="1">
    <location>
        <begin position="1"/>
        <end position="21"/>
    </location>
</feature>
<feature type="transmembrane region" description="Helical" evidence="1">
    <location>
        <begin position="38"/>
        <end position="58"/>
    </location>
</feature>
<feature type="transmembrane region" description="Helical" evidence="1">
    <location>
        <begin position="72"/>
        <end position="92"/>
    </location>
</feature>
<feature type="transmembrane region" description="Helical" evidence="1">
    <location>
        <begin position="125"/>
        <end position="145"/>
    </location>
</feature>
<feature type="transmembrane region" description="Helical" evidence="1">
    <location>
        <begin position="154"/>
        <end position="174"/>
    </location>
</feature>
<feature type="transmembrane region" description="Helical" evidence="1">
    <location>
        <begin position="255"/>
        <end position="275"/>
    </location>
</feature>
<feature type="transmembrane region" description="Helical" evidence="1">
    <location>
        <begin position="284"/>
        <end position="304"/>
    </location>
</feature>
<feature type="transmembrane region" description="Helical" evidence="1">
    <location>
        <begin position="318"/>
        <end position="338"/>
    </location>
</feature>
<feature type="transmembrane region" description="Helical" evidence="1">
    <location>
        <begin position="348"/>
        <end position="368"/>
    </location>
</feature>
<feature type="transmembrane region" description="Helical" evidence="1">
    <location>
        <begin position="398"/>
        <end position="418"/>
    </location>
</feature>
<feature type="transmembrane region" description="Helical" evidence="1">
    <location>
        <begin position="427"/>
        <end position="447"/>
    </location>
</feature>
<feature type="region of interest" description="Disordered" evidence="2">
    <location>
        <begin position="206"/>
        <end position="225"/>
    </location>
</feature>
<keyword id="KW-0472">Membrane</keyword>
<keyword id="KW-0812">Transmembrane</keyword>
<keyword id="KW-1133">Transmembrane helix</keyword>
<keyword id="KW-0813">Transport</keyword>
<comment type="function">
    <text evidence="3 4 6">MFS-type transporter; part of the gene cluster that mediates the biosynthesis of pyrrolopyrazines, secondary metabolites showing insecticidal activity (PubMed:30452111, PubMed:38578094). Probably involved in the secretion of peramine and other pyrrolopyrazines (Probable).</text>
</comment>
<comment type="subcellular location">
    <subcellularLocation>
        <location evidence="1">Membrane</location>
        <topology evidence="1">Multi-pass membrane protein</topology>
    </subcellularLocation>
</comment>
<comment type="similarity">
    <text evidence="6">Belongs to the major facilitator superfamily. TCR/Tet family.</text>
</comment>
<sequence>MGLFTDLVLYGIVLPALPFIMRNRFHIPNAELQHYTSGFLATYAGASVFFSVPAGWAASKLGSRQLFLGGLVFLFVATAIFAFSTSLALLVVSRLLQGMSTAVVWTAGLDMVQDTVDPSQIGVTIGTIFATISVGELAAPVLGGVLYERGGIAAVFAVSAVMLAIDLGLRGLVIDKKAAVKFESPCLIRSSAERSDHVASAPTVVEAQERTHEGTPLLPQDDDDDSDRYKIDRELGSIVQAIPLLYCFREPRLHLAMLLSFVQALFIGTFDATVPTEAESLFHFSSLQVGLVFIALMLPYFALGRLAGQAVDRFGTKAAATSGYAFLVPCLLLLGLPEKKLVSKEANVALFCTILALNGIGLAVVTSPGYVEAIDVTTKYQVANPGHFGENGPYAQLFGFSSLYFFTGLAVGPLLGGVLRAKFGYAVMGAVYAAISGVTAIVSFLFVGTRRGVCWG</sequence>
<reference key="1">
    <citation type="journal article" date="2019" name="Environ. Microbiol.">
        <title>Orthologous peramine and pyrrolopyrazine-producing biosynthetic gene clusters in Metarhizium rileyi, Metarhizium majus and Cladonia grayi.</title>
        <authorList>
            <person name="Berry D."/>
            <person name="Mace W."/>
            <person name="Rehner S.A."/>
            <person name="Grage K."/>
            <person name="Dijkwel P.P."/>
            <person name="Young C.A."/>
            <person name="Scott B."/>
        </authorList>
    </citation>
    <scope>NUCLEOTIDE SEQUENCE [GENOMIC DNA]</scope>
    <scope>FUNCTION</scope>
    <scope>PATHWAY</scope>
    <source>
        <strain>ARSEF 297</strain>
    </source>
</reference>
<reference key="2">
    <citation type="journal article" date="2024" name="J. Am. Chem. Soc.">
        <title>Two Iron(II), alpha-Ketoglutarate-Dependent Enzymes Encoded by the PPZ Gene Cluster of Metarhizium majus Enable Production of 8-Hydroxyperamine.</title>
        <authorList>
            <person name="Rothchild K.W."/>
            <person name="Hagar M."/>
            <person name="Berry D."/>
            <person name="Ryan K.S."/>
        </authorList>
    </citation>
    <scope>FUNCTION</scope>
    <scope>PATHWAY</scope>
</reference>
<organism>
    <name type="scientific">Metarhizium majus (strain ARSEF 297)</name>
    <dbReference type="NCBI Taxonomy" id="1276143"/>
    <lineage>
        <taxon>Eukaryota</taxon>
        <taxon>Fungi</taxon>
        <taxon>Dikarya</taxon>
        <taxon>Ascomycota</taxon>
        <taxon>Pezizomycotina</taxon>
        <taxon>Sordariomycetes</taxon>
        <taxon>Hypocreomycetidae</taxon>
        <taxon>Hypocreales</taxon>
        <taxon>Clavicipitaceae</taxon>
        <taxon>Metarhizium</taxon>
        <taxon>Metarhizium majus</taxon>
    </lineage>
</organism>
<proteinExistence type="inferred from homology"/>
<protein>
    <recommendedName>
        <fullName evidence="5">MFS-type transporter ppzB</fullName>
    </recommendedName>
    <alternativeName>
        <fullName evidence="5">Pyrrolopyrazine biosynthesis cluster protein B</fullName>
    </alternativeName>
</protein>
<name>PPZB_METMF</name>
<accession>A0A455ZIM5</accession>
<evidence type="ECO:0000255" key="1"/>
<evidence type="ECO:0000256" key="2">
    <source>
        <dbReference type="SAM" id="MobiDB-lite"/>
    </source>
</evidence>
<evidence type="ECO:0000269" key="3">
    <source>
    </source>
</evidence>
<evidence type="ECO:0000269" key="4">
    <source>
    </source>
</evidence>
<evidence type="ECO:0000303" key="5">
    <source>
    </source>
</evidence>
<evidence type="ECO:0000305" key="6"/>